<protein>
    <recommendedName>
        <fullName evidence="1">Alanine racemase</fullName>
        <ecNumber evidence="1">5.1.1.1</ecNumber>
    </recommendedName>
</protein>
<keyword id="KW-0413">Isomerase</keyword>
<keyword id="KW-0663">Pyridoxal phosphate</keyword>
<keyword id="KW-1185">Reference proteome</keyword>
<organism>
    <name type="scientific">Desulfosudis oleivorans (strain DSM 6200 / JCM 39069 / Hxd3)</name>
    <name type="common">Desulfococcus oleovorans</name>
    <dbReference type="NCBI Taxonomy" id="96561"/>
    <lineage>
        <taxon>Bacteria</taxon>
        <taxon>Pseudomonadati</taxon>
        <taxon>Thermodesulfobacteriota</taxon>
        <taxon>Desulfobacteria</taxon>
        <taxon>Desulfobacterales</taxon>
        <taxon>Desulfosudaceae</taxon>
        <taxon>Desulfosudis</taxon>
    </lineage>
</organism>
<accession>A8ZRV0</accession>
<sequence length="390" mass="40872">MNDFSAWAEIDLDAVAHNVAALKALTRPACRLMAAVKADGYGHGMCEVASVALESGASALGVSRIDEALDLRNHGITAPILVLGHTPAHRCREMVDQNLIQTVCALAEAQALSRAATAIGATVSVHLKVDTGMGRLGINTVVPGRTAPQEAAVKEALAVLDLPGLAAEGVFTHFACADSADKTHANAQFKRFSTLIQELEAAGRPVAVRHAANSAALIDMPETHLDMVRAGIAIYGLYPSAEVDRQKVALKPAMAFKTRVAQVKKVPAGFTVSYGATYTTPKPTVLAVVSVGYADGLNRLLSSRGFMLVRGCRVPLVGRICMDLTMLDVGGVPDVAVGDEVVIFGSQNGAFIGADEIADALNTISYEVVTSITGRVPRVYCNGSSSAVRR</sequence>
<proteinExistence type="inferred from homology"/>
<dbReference type="EC" id="5.1.1.1" evidence="1"/>
<dbReference type="EMBL" id="CP000859">
    <property type="protein sequence ID" value="ABW65867.1"/>
    <property type="molecule type" value="Genomic_DNA"/>
</dbReference>
<dbReference type="RefSeq" id="WP_012173486.1">
    <property type="nucleotide sequence ID" value="NC_009943.1"/>
</dbReference>
<dbReference type="SMR" id="A8ZRV0"/>
<dbReference type="STRING" id="96561.Dole_0057"/>
<dbReference type="KEGG" id="dol:Dole_0057"/>
<dbReference type="eggNOG" id="COG0787">
    <property type="taxonomic scope" value="Bacteria"/>
</dbReference>
<dbReference type="HOGENOM" id="CLU_028393_2_2_7"/>
<dbReference type="OrthoDB" id="9813814at2"/>
<dbReference type="UniPathway" id="UPA00042">
    <property type="reaction ID" value="UER00497"/>
</dbReference>
<dbReference type="Proteomes" id="UP000008561">
    <property type="component" value="Chromosome"/>
</dbReference>
<dbReference type="GO" id="GO:0005829">
    <property type="term" value="C:cytosol"/>
    <property type="evidence" value="ECO:0007669"/>
    <property type="project" value="TreeGrafter"/>
</dbReference>
<dbReference type="GO" id="GO:0008784">
    <property type="term" value="F:alanine racemase activity"/>
    <property type="evidence" value="ECO:0007669"/>
    <property type="project" value="UniProtKB-UniRule"/>
</dbReference>
<dbReference type="GO" id="GO:0030170">
    <property type="term" value="F:pyridoxal phosphate binding"/>
    <property type="evidence" value="ECO:0007669"/>
    <property type="project" value="UniProtKB-UniRule"/>
</dbReference>
<dbReference type="GO" id="GO:0030632">
    <property type="term" value="P:D-alanine biosynthetic process"/>
    <property type="evidence" value="ECO:0007669"/>
    <property type="project" value="UniProtKB-UniRule"/>
</dbReference>
<dbReference type="GO" id="GO:0009252">
    <property type="term" value="P:peptidoglycan biosynthetic process"/>
    <property type="evidence" value="ECO:0007669"/>
    <property type="project" value="TreeGrafter"/>
</dbReference>
<dbReference type="CDD" id="cd00430">
    <property type="entry name" value="PLPDE_III_AR"/>
    <property type="match status" value="1"/>
</dbReference>
<dbReference type="FunFam" id="3.20.20.10:FF:000002">
    <property type="entry name" value="Alanine racemase"/>
    <property type="match status" value="1"/>
</dbReference>
<dbReference type="Gene3D" id="3.20.20.10">
    <property type="entry name" value="Alanine racemase"/>
    <property type="match status" value="1"/>
</dbReference>
<dbReference type="Gene3D" id="2.40.37.10">
    <property type="entry name" value="Lyase, Ornithine Decarboxylase, Chain A, domain 1"/>
    <property type="match status" value="1"/>
</dbReference>
<dbReference type="HAMAP" id="MF_01201">
    <property type="entry name" value="Ala_racemase"/>
    <property type="match status" value="1"/>
</dbReference>
<dbReference type="InterPro" id="IPR000821">
    <property type="entry name" value="Ala_racemase"/>
</dbReference>
<dbReference type="InterPro" id="IPR009006">
    <property type="entry name" value="Ala_racemase/Decarboxylase_C"/>
</dbReference>
<dbReference type="InterPro" id="IPR011079">
    <property type="entry name" value="Ala_racemase_C"/>
</dbReference>
<dbReference type="InterPro" id="IPR001608">
    <property type="entry name" value="Ala_racemase_N"/>
</dbReference>
<dbReference type="InterPro" id="IPR020622">
    <property type="entry name" value="Ala_racemase_pyridoxalP-BS"/>
</dbReference>
<dbReference type="InterPro" id="IPR029066">
    <property type="entry name" value="PLP-binding_barrel"/>
</dbReference>
<dbReference type="NCBIfam" id="TIGR00492">
    <property type="entry name" value="alr"/>
    <property type="match status" value="1"/>
</dbReference>
<dbReference type="PANTHER" id="PTHR30511">
    <property type="entry name" value="ALANINE RACEMASE"/>
    <property type="match status" value="1"/>
</dbReference>
<dbReference type="PANTHER" id="PTHR30511:SF0">
    <property type="entry name" value="ALANINE RACEMASE, CATABOLIC-RELATED"/>
    <property type="match status" value="1"/>
</dbReference>
<dbReference type="Pfam" id="PF00842">
    <property type="entry name" value="Ala_racemase_C"/>
    <property type="match status" value="1"/>
</dbReference>
<dbReference type="Pfam" id="PF01168">
    <property type="entry name" value="Ala_racemase_N"/>
    <property type="match status" value="1"/>
</dbReference>
<dbReference type="PRINTS" id="PR00992">
    <property type="entry name" value="ALARACEMASE"/>
</dbReference>
<dbReference type="SMART" id="SM01005">
    <property type="entry name" value="Ala_racemase_C"/>
    <property type="match status" value="1"/>
</dbReference>
<dbReference type="SUPFAM" id="SSF50621">
    <property type="entry name" value="Alanine racemase C-terminal domain-like"/>
    <property type="match status" value="1"/>
</dbReference>
<dbReference type="SUPFAM" id="SSF51419">
    <property type="entry name" value="PLP-binding barrel"/>
    <property type="match status" value="1"/>
</dbReference>
<dbReference type="PROSITE" id="PS00395">
    <property type="entry name" value="ALANINE_RACEMASE"/>
    <property type="match status" value="1"/>
</dbReference>
<feature type="chain" id="PRO_1000164591" description="Alanine racemase">
    <location>
        <begin position="1"/>
        <end position="390"/>
    </location>
</feature>
<feature type="active site" description="Proton acceptor; specific for D-alanine" evidence="1">
    <location>
        <position position="37"/>
    </location>
</feature>
<feature type="active site" description="Proton acceptor; specific for L-alanine" evidence="1">
    <location>
        <position position="274"/>
    </location>
</feature>
<feature type="binding site" evidence="1">
    <location>
        <position position="135"/>
    </location>
    <ligand>
        <name>substrate</name>
    </ligand>
</feature>
<feature type="binding site" evidence="1">
    <location>
        <position position="322"/>
    </location>
    <ligand>
        <name>substrate</name>
    </ligand>
</feature>
<feature type="modified residue" description="N6-(pyridoxal phosphate)lysine" evidence="1">
    <location>
        <position position="37"/>
    </location>
</feature>
<gene>
    <name type="primary">alr</name>
    <name type="ordered locus">Dole_0057</name>
</gene>
<comment type="function">
    <text evidence="1">Catalyzes the interconversion of L-alanine and D-alanine. May also act on other amino acids.</text>
</comment>
<comment type="catalytic activity">
    <reaction evidence="1">
        <text>L-alanine = D-alanine</text>
        <dbReference type="Rhea" id="RHEA:20249"/>
        <dbReference type="ChEBI" id="CHEBI:57416"/>
        <dbReference type="ChEBI" id="CHEBI:57972"/>
        <dbReference type="EC" id="5.1.1.1"/>
    </reaction>
</comment>
<comment type="cofactor">
    <cofactor evidence="1">
        <name>pyridoxal 5'-phosphate</name>
        <dbReference type="ChEBI" id="CHEBI:597326"/>
    </cofactor>
</comment>
<comment type="pathway">
    <text evidence="1">Amino-acid biosynthesis; D-alanine biosynthesis; D-alanine from L-alanine: step 1/1.</text>
</comment>
<comment type="similarity">
    <text evidence="1">Belongs to the alanine racemase family.</text>
</comment>
<name>ALR_DESOH</name>
<reference key="1">
    <citation type="submission" date="2007-10" db="EMBL/GenBank/DDBJ databases">
        <title>Complete sequence of Desulfococcus oleovorans Hxd3.</title>
        <authorList>
            <consortium name="US DOE Joint Genome Institute"/>
            <person name="Copeland A."/>
            <person name="Lucas S."/>
            <person name="Lapidus A."/>
            <person name="Barry K."/>
            <person name="Glavina del Rio T."/>
            <person name="Dalin E."/>
            <person name="Tice H."/>
            <person name="Pitluck S."/>
            <person name="Kiss H."/>
            <person name="Brettin T."/>
            <person name="Bruce D."/>
            <person name="Detter J.C."/>
            <person name="Han C."/>
            <person name="Schmutz J."/>
            <person name="Larimer F."/>
            <person name="Land M."/>
            <person name="Hauser L."/>
            <person name="Kyrpides N."/>
            <person name="Kim E."/>
            <person name="Wawrik B."/>
            <person name="Richardson P."/>
        </authorList>
    </citation>
    <scope>NUCLEOTIDE SEQUENCE [LARGE SCALE GENOMIC DNA]</scope>
    <source>
        <strain>DSM 6200 / JCM 39069 / Hxd3</strain>
    </source>
</reference>
<evidence type="ECO:0000255" key="1">
    <source>
        <dbReference type="HAMAP-Rule" id="MF_01201"/>
    </source>
</evidence>